<proteinExistence type="inferred from homology"/>
<organism>
    <name type="scientific">Ralstonia pickettii (strain 12J)</name>
    <dbReference type="NCBI Taxonomy" id="402626"/>
    <lineage>
        <taxon>Bacteria</taxon>
        <taxon>Pseudomonadati</taxon>
        <taxon>Pseudomonadota</taxon>
        <taxon>Betaproteobacteria</taxon>
        <taxon>Burkholderiales</taxon>
        <taxon>Burkholderiaceae</taxon>
        <taxon>Ralstonia</taxon>
    </lineage>
</organism>
<sequence length="345" mass="38139">MPISSALAERIATSPKAELHIHIEGSLEPELMFALAERNGVKLPYASVEEVRAAYAFDDLQSFLDLYYAGASVLLTEQDFYDMTAAYVARALADNVHHAEIFFDPQTHTARNVPMHVVIHGIVRALDDAEREHGFSSALILCFLRHLSEEDAFDTLEAALPYIQDPANRIIGVGLDSSERGNPPEKFARVFARCKELGLRLVAHAGEEGPAQYVIDALDILKVERIDHGVRAIDDAALVKRLAAERIALTVCPLSNEKLKVYPDLRDHSLKQLLDAGCAVTLHSDDPAYFGGYMNTNWLATFNALDLSAADAHALARNSFEASFLPEQDKALWLAKVDDHWKAAH</sequence>
<keyword id="KW-0378">Hydrolase</keyword>
<keyword id="KW-0479">Metal-binding</keyword>
<keyword id="KW-0546">Nucleotide metabolism</keyword>
<keyword id="KW-0862">Zinc</keyword>
<gene>
    <name type="ordered locus">Rpic_2249</name>
</gene>
<comment type="function">
    <text evidence="1">Catalyzes the hydrolytic deamination of adenine to hypoxanthine. Plays an important role in the purine salvage pathway and in nitrogen catabolism.</text>
</comment>
<comment type="catalytic activity">
    <reaction evidence="1">
        <text>adenine + H2O + H(+) = hypoxanthine + NH4(+)</text>
        <dbReference type="Rhea" id="RHEA:23688"/>
        <dbReference type="ChEBI" id="CHEBI:15377"/>
        <dbReference type="ChEBI" id="CHEBI:15378"/>
        <dbReference type="ChEBI" id="CHEBI:16708"/>
        <dbReference type="ChEBI" id="CHEBI:17368"/>
        <dbReference type="ChEBI" id="CHEBI:28938"/>
        <dbReference type="EC" id="3.5.4.2"/>
    </reaction>
</comment>
<comment type="cofactor">
    <cofactor evidence="1">
        <name>Zn(2+)</name>
        <dbReference type="ChEBI" id="CHEBI:29105"/>
    </cofactor>
    <text evidence="1">Binds 1 zinc ion per subunit.</text>
</comment>
<comment type="similarity">
    <text evidence="1">Belongs to the metallo-dependent hydrolases superfamily. Adenosine and AMP deaminases family. Adenine deaminase type 2 subfamily.</text>
</comment>
<feature type="chain" id="PRO_1000128857" description="Adenine deaminase">
    <location>
        <begin position="1"/>
        <end position="345"/>
    </location>
</feature>
<feature type="active site" description="Proton donor" evidence="1">
    <location>
        <position position="207"/>
    </location>
</feature>
<feature type="binding site" evidence="1">
    <location>
        <position position="20"/>
    </location>
    <ligand>
        <name>Zn(2+)</name>
        <dbReference type="ChEBI" id="CHEBI:29105"/>
        <note>catalytic</note>
    </ligand>
</feature>
<feature type="binding site" evidence="1">
    <location>
        <position position="22"/>
    </location>
    <ligand>
        <name>Zn(2+)</name>
        <dbReference type="ChEBI" id="CHEBI:29105"/>
        <note>catalytic</note>
    </ligand>
</feature>
<feature type="binding site" evidence="1">
    <location>
        <position position="204"/>
    </location>
    <ligand>
        <name>Zn(2+)</name>
        <dbReference type="ChEBI" id="CHEBI:29105"/>
        <note>catalytic</note>
    </ligand>
</feature>
<feature type="binding site" evidence="1">
    <location>
        <position position="285"/>
    </location>
    <ligand>
        <name>Zn(2+)</name>
        <dbReference type="ChEBI" id="CHEBI:29105"/>
        <note>catalytic</note>
    </ligand>
</feature>
<feature type="binding site" evidence="1">
    <location>
        <position position="286"/>
    </location>
    <ligand>
        <name>substrate</name>
    </ligand>
</feature>
<feature type="site" description="Important for catalytic activity" evidence="1">
    <location>
        <position position="228"/>
    </location>
</feature>
<accession>B2U7U6</accession>
<evidence type="ECO:0000255" key="1">
    <source>
        <dbReference type="HAMAP-Rule" id="MF_01962"/>
    </source>
</evidence>
<dbReference type="EC" id="3.5.4.2" evidence="1"/>
<dbReference type="EMBL" id="CP001068">
    <property type="protein sequence ID" value="ACD27383.1"/>
    <property type="molecule type" value="Genomic_DNA"/>
</dbReference>
<dbReference type="SMR" id="B2U7U6"/>
<dbReference type="STRING" id="402626.Rpic_2249"/>
<dbReference type="KEGG" id="rpi:Rpic_2249"/>
<dbReference type="PATRIC" id="fig|402626.5.peg.3396"/>
<dbReference type="eggNOG" id="COG1816">
    <property type="taxonomic scope" value="Bacteria"/>
</dbReference>
<dbReference type="HOGENOM" id="CLU_039228_7_0_4"/>
<dbReference type="GO" id="GO:0005829">
    <property type="term" value="C:cytosol"/>
    <property type="evidence" value="ECO:0007669"/>
    <property type="project" value="TreeGrafter"/>
</dbReference>
<dbReference type="GO" id="GO:0000034">
    <property type="term" value="F:adenine deaminase activity"/>
    <property type="evidence" value="ECO:0007669"/>
    <property type="project" value="UniProtKB-UniRule"/>
</dbReference>
<dbReference type="GO" id="GO:0008270">
    <property type="term" value="F:zinc ion binding"/>
    <property type="evidence" value="ECO:0007669"/>
    <property type="project" value="UniProtKB-UniRule"/>
</dbReference>
<dbReference type="GO" id="GO:0006146">
    <property type="term" value="P:adenine catabolic process"/>
    <property type="evidence" value="ECO:0007669"/>
    <property type="project" value="UniProtKB-UniRule"/>
</dbReference>
<dbReference type="GO" id="GO:0043103">
    <property type="term" value="P:hypoxanthine salvage"/>
    <property type="evidence" value="ECO:0007669"/>
    <property type="project" value="UniProtKB-UniRule"/>
</dbReference>
<dbReference type="GO" id="GO:0009117">
    <property type="term" value="P:nucleotide metabolic process"/>
    <property type="evidence" value="ECO:0007669"/>
    <property type="project" value="UniProtKB-KW"/>
</dbReference>
<dbReference type="CDD" id="cd01320">
    <property type="entry name" value="ADA"/>
    <property type="match status" value="1"/>
</dbReference>
<dbReference type="FunFam" id="3.20.20.140:FF:000039">
    <property type="entry name" value="Adenine deaminase"/>
    <property type="match status" value="1"/>
</dbReference>
<dbReference type="Gene3D" id="3.20.20.140">
    <property type="entry name" value="Metal-dependent hydrolases"/>
    <property type="match status" value="1"/>
</dbReference>
<dbReference type="HAMAP" id="MF_01962">
    <property type="entry name" value="Adenine_deaminase"/>
    <property type="match status" value="1"/>
</dbReference>
<dbReference type="InterPro" id="IPR001365">
    <property type="entry name" value="A_deaminase_dom"/>
</dbReference>
<dbReference type="InterPro" id="IPR028892">
    <property type="entry name" value="ADE"/>
</dbReference>
<dbReference type="InterPro" id="IPR006330">
    <property type="entry name" value="Ado/ade_deaminase"/>
</dbReference>
<dbReference type="InterPro" id="IPR032466">
    <property type="entry name" value="Metal_Hydrolase"/>
</dbReference>
<dbReference type="NCBIfam" id="TIGR01430">
    <property type="entry name" value="aden_deam"/>
    <property type="match status" value="1"/>
</dbReference>
<dbReference type="NCBIfam" id="NF006850">
    <property type="entry name" value="PRK09358.1-6"/>
    <property type="match status" value="1"/>
</dbReference>
<dbReference type="PANTHER" id="PTHR43114">
    <property type="entry name" value="ADENINE DEAMINASE"/>
    <property type="match status" value="1"/>
</dbReference>
<dbReference type="PANTHER" id="PTHR43114:SF6">
    <property type="entry name" value="ADENINE DEAMINASE"/>
    <property type="match status" value="1"/>
</dbReference>
<dbReference type="Pfam" id="PF00962">
    <property type="entry name" value="A_deaminase"/>
    <property type="match status" value="1"/>
</dbReference>
<dbReference type="SUPFAM" id="SSF51556">
    <property type="entry name" value="Metallo-dependent hydrolases"/>
    <property type="match status" value="1"/>
</dbReference>
<protein>
    <recommendedName>
        <fullName evidence="1">Adenine deaminase</fullName>
        <shortName evidence="1">ADE</shortName>
        <ecNumber evidence="1">3.5.4.2</ecNumber>
    </recommendedName>
    <alternativeName>
        <fullName evidence="1">Adenine aminohydrolase</fullName>
        <shortName evidence="1">AAH</shortName>
    </alternativeName>
</protein>
<name>ADE_RALPJ</name>
<reference key="1">
    <citation type="submission" date="2008-05" db="EMBL/GenBank/DDBJ databases">
        <title>Complete sequence of chromosome 1 of Ralstonia pickettii 12J.</title>
        <authorList>
            <person name="Lucas S."/>
            <person name="Copeland A."/>
            <person name="Lapidus A."/>
            <person name="Glavina del Rio T."/>
            <person name="Dalin E."/>
            <person name="Tice H."/>
            <person name="Bruce D."/>
            <person name="Goodwin L."/>
            <person name="Pitluck S."/>
            <person name="Meincke L."/>
            <person name="Brettin T."/>
            <person name="Detter J.C."/>
            <person name="Han C."/>
            <person name="Kuske C.R."/>
            <person name="Schmutz J."/>
            <person name="Larimer F."/>
            <person name="Land M."/>
            <person name="Hauser L."/>
            <person name="Kyrpides N."/>
            <person name="Mikhailova N."/>
            <person name="Marsh T."/>
            <person name="Richardson P."/>
        </authorList>
    </citation>
    <scope>NUCLEOTIDE SEQUENCE [LARGE SCALE GENOMIC DNA]</scope>
    <source>
        <strain>12J</strain>
    </source>
</reference>